<evidence type="ECO:0000255" key="1">
    <source>
        <dbReference type="HAMAP-Rule" id="MF_00381"/>
    </source>
</evidence>
<comment type="function">
    <text evidence="1">This protein is one of the two subunits of integration host factor, a specific DNA-binding protein that functions in genetic recombination as well as in transcriptional and translational control.</text>
</comment>
<comment type="subunit">
    <text evidence="1">Heterodimer of an alpha and a beta chain.</text>
</comment>
<comment type="similarity">
    <text evidence="1">Belongs to the bacterial histone-like protein family.</text>
</comment>
<sequence>MTKSELIELLAKKNPSISTKIVENSVKEILEQMSGSLENSDRIEIRGFGSFSLHYRQPRLGRNPKTGESVKLDAKCVPHFKAGKELKERVDFKA</sequence>
<gene>
    <name evidence="1" type="primary">ihfB</name>
    <name evidence="1" type="synonym">himD</name>
    <name type="ordered locus">Asuc_1551</name>
</gene>
<organism>
    <name type="scientific">Actinobacillus succinogenes (strain ATCC 55618 / DSM 22257 / CCUG 43843 / 130Z)</name>
    <dbReference type="NCBI Taxonomy" id="339671"/>
    <lineage>
        <taxon>Bacteria</taxon>
        <taxon>Pseudomonadati</taxon>
        <taxon>Pseudomonadota</taxon>
        <taxon>Gammaproteobacteria</taxon>
        <taxon>Pasteurellales</taxon>
        <taxon>Pasteurellaceae</taxon>
        <taxon>Actinobacillus</taxon>
    </lineage>
</organism>
<feature type="chain" id="PRO_1000072175" description="Integration host factor subunit beta">
    <location>
        <begin position="1"/>
        <end position="94"/>
    </location>
</feature>
<dbReference type="EMBL" id="CP000746">
    <property type="protein sequence ID" value="ABR74905.1"/>
    <property type="molecule type" value="Genomic_DNA"/>
</dbReference>
<dbReference type="RefSeq" id="WP_012073282.1">
    <property type="nucleotide sequence ID" value="NC_009655.1"/>
</dbReference>
<dbReference type="SMR" id="A6VPK8"/>
<dbReference type="STRING" id="339671.Asuc_1551"/>
<dbReference type="KEGG" id="asu:Asuc_1551"/>
<dbReference type="eggNOG" id="COG0776">
    <property type="taxonomic scope" value="Bacteria"/>
</dbReference>
<dbReference type="HOGENOM" id="CLU_105066_2_0_6"/>
<dbReference type="OrthoDB" id="9804203at2"/>
<dbReference type="Proteomes" id="UP000001114">
    <property type="component" value="Chromosome"/>
</dbReference>
<dbReference type="GO" id="GO:0005694">
    <property type="term" value="C:chromosome"/>
    <property type="evidence" value="ECO:0007669"/>
    <property type="project" value="InterPro"/>
</dbReference>
<dbReference type="GO" id="GO:0005829">
    <property type="term" value="C:cytosol"/>
    <property type="evidence" value="ECO:0007669"/>
    <property type="project" value="TreeGrafter"/>
</dbReference>
<dbReference type="GO" id="GO:0003677">
    <property type="term" value="F:DNA binding"/>
    <property type="evidence" value="ECO:0007669"/>
    <property type="project" value="UniProtKB-UniRule"/>
</dbReference>
<dbReference type="GO" id="GO:0030527">
    <property type="term" value="F:structural constituent of chromatin"/>
    <property type="evidence" value="ECO:0007669"/>
    <property type="project" value="InterPro"/>
</dbReference>
<dbReference type="GO" id="GO:0006310">
    <property type="term" value="P:DNA recombination"/>
    <property type="evidence" value="ECO:0007669"/>
    <property type="project" value="UniProtKB-UniRule"/>
</dbReference>
<dbReference type="GO" id="GO:0006355">
    <property type="term" value="P:regulation of DNA-templated transcription"/>
    <property type="evidence" value="ECO:0007669"/>
    <property type="project" value="UniProtKB-UniRule"/>
</dbReference>
<dbReference type="GO" id="GO:0006417">
    <property type="term" value="P:regulation of translation"/>
    <property type="evidence" value="ECO:0007669"/>
    <property type="project" value="UniProtKB-UniRule"/>
</dbReference>
<dbReference type="CDD" id="cd13836">
    <property type="entry name" value="IHF_B"/>
    <property type="match status" value="1"/>
</dbReference>
<dbReference type="FunFam" id="4.10.520.10:FF:000003">
    <property type="entry name" value="Integration host factor subunit beta"/>
    <property type="match status" value="1"/>
</dbReference>
<dbReference type="Gene3D" id="4.10.520.10">
    <property type="entry name" value="IHF-like DNA-binding proteins"/>
    <property type="match status" value="1"/>
</dbReference>
<dbReference type="HAMAP" id="MF_00381">
    <property type="entry name" value="IHF_beta"/>
    <property type="match status" value="1"/>
</dbReference>
<dbReference type="InterPro" id="IPR000119">
    <property type="entry name" value="Hist_DNA-bd"/>
</dbReference>
<dbReference type="InterPro" id="IPR020816">
    <property type="entry name" value="Histone-like_DNA-bd_CS"/>
</dbReference>
<dbReference type="InterPro" id="IPR010992">
    <property type="entry name" value="IHF-like_DNA-bd_dom_sf"/>
</dbReference>
<dbReference type="InterPro" id="IPR005685">
    <property type="entry name" value="IHF_beta"/>
</dbReference>
<dbReference type="NCBIfam" id="TIGR00988">
    <property type="entry name" value="hip"/>
    <property type="match status" value="1"/>
</dbReference>
<dbReference type="NCBIfam" id="NF001222">
    <property type="entry name" value="PRK00199.1"/>
    <property type="match status" value="1"/>
</dbReference>
<dbReference type="PANTHER" id="PTHR33175">
    <property type="entry name" value="DNA-BINDING PROTEIN HU"/>
    <property type="match status" value="1"/>
</dbReference>
<dbReference type="PANTHER" id="PTHR33175:SF5">
    <property type="entry name" value="INTEGRATION HOST FACTOR SUBUNIT BETA"/>
    <property type="match status" value="1"/>
</dbReference>
<dbReference type="Pfam" id="PF00216">
    <property type="entry name" value="Bac_DNA_binding"/>
    <property type="match status" value="1"/>
</dbReference>
<dbReference type="PRINTS" id="PR01727">
    <property type="entry name" value="DNABINDINGHU"/>
</dbReference>
<dbReference type="SMART" id="SM00411">
    <property type="entry name" value="BHL"/>
    <property type="match status" value="1"/>
</dbReference>
<dbReference type="SUPFAM" id="SSF47729">
    <property type="entry name" value="IHF-like DNA-binding proteins"/>
    <property type="match status" value="1"/>
</dbReference>
<dbReference type="PROSITE" id="PS00045">
    <property type="entry name" value="HISTONE_LIKE"/>
    <property type="match status" value="1"/>
</dbReference>
<keyword id="KW-0233">DNA recombination</keyword>
<keyword id="KW-0238">DNA-binding</keyword>
<keyword id="KW-1185">Reference proteome</keyword>
<keyword id="KW-0804">Transcription</keyword>
<keyword id="KW-0805">Transcription regulation</keyword>
<keyword id="KW-0810">Translation regulation</keyword>
<proteinExistence type="inferred from homology"/>
<name>IHFB_ACTSZ</name>
<accession>A6VPK8</accession>
<protein>
    <recommendedName>
        <fullName evidence="1">Integration host factor subunit beta</fullName>
        <shortName evidence="1">IHF-beta</shortName>
    </recommendedName>
</protein>
<reference key="1">
    <citation type="journal article" date="2010" name="BMC Genomics">
        <title>A genomic perspective on the potential of Actinobacillus succinogenes for industrial succinate production.</title>
        <authorList>
            <person name="McKinlay J.B."/>
            <person name="Laivenieks M."/>
            <person name="Schindler B.D."/>
            <person name="McKinlay A.A."/>
            <person name="Siddaramappa S."/>
            <person name="Challacombe J.F."/>
            <person name="Lowry S.R."/>
            <person name="Clum A."/>
            <person name="Lapidus A.L."/>
            <person name="Burkhart K.B."/>
            <person name="Harkins V."/>
            <person name="Vieille C."/>
        </authorList>
    </citation>
    <scope>NUCLEOTIDE SEQUENCE [LARGE SCALE GENOMIC DNA]</scope>
    <source>
        <strain>ATCC 55618 / DSM 22257 / CCUG 43843 / 130Z</strain>
    </source>
</reference>